<keyword id="KW-0880">Kelch repeat</keyword>
<keyword id="KW-1185">Reference proteome</keyword>
<keyword id="KW-0677">Repeat</keyword>
<reference key="1">
    <citation type="journal article" date="2000" name="DNA Res.">
        <title>Structural analysis of Arabidopsis thaliana chromosome 3. I. Sequence features of the regions of 4,504,864 bp covered by sixty P1 and TAC clones.</title>
        <authorList>
            <person name="Sato S."/>
            <person name="Nakamura Y."/>
            <person name="Kaneko T."/>
            <person name="Katoh T."/>
            <person name="Asamizu E."/>
            <person name="Tabata S."/>
        </authorList>
    </citation>
    <scope>NUCLEOTIDE SEQUENCE [LARGE SCALE GENOMIC DNA]</scope>
    <source>
        <strain>cv. Columbia</strain>
    </source>
</reference>
<reference key="2">
    <citation type="journal article" date="2017" name="Plant J.">
        <title>Araport11: a complete reannotation of the Arabidopsis thaliana reference genome.</title>
        <authorList>
            <person name="Cheng C.Y."/>
            <person name="Krishnakumar V."/>
            <person name="Chan A.P."/>
            <person name="Thibaud-Nissen F."/>
            <person name="Schobel S."/>
            <person name="Town C.D."/>
        </authorList>
    </citation>
    <scope>GENOME REANNOTATION</scope>
    <source>
        <strain>cv. Columbia</strain>
    </source>
</reference>
<gene>
    <name type="ordered locus">At3g17540</name>
    <name type="ORF">MKP6.9</name>
</gene>
<name>FBK60_ARATH</name>
<protein>
    <recommendedName>
        <fullName>Putative F-box/kelch-repeat protein At3g17540</fullName>
    </recommendedName>
</protein>
<feature type="chain" id="PRO_0000283220" description="Putative F-box/kelch-repeat protein At3g17540">
    <location>
        <begin position="1"/>
        <end position="396"/>
    </location>
</feature>
<feature type="domain" description="F-box" evidence="1">
    <location>
        <begin position="4"/>
        <end position="50"/>
    </location>
</feature>
<feature type="repeat" description="Kelch 1">
    <location>
        <begin position="163"/>
        <end position="209"/>
    </location>
</feature>
<feature type="repeat" description="Kelch 2">
    <location>
        <begin position="253"/>
        <end position="299"/>
    </location>
</feature>
<feature type="repeat" description="Kelch 3">
    <location>
        <begin position="338"/>
        <end position="386"/>
    </location>
</feature>
<sequence length="396" mass="46556">MRKTMVISDLPHEIESEILSRVPTKSLAKLHTTCKRWYALFRDPRFVKKNFGKSERRLMLHSNFGVYKITDDLHGILNSGDPSLEFTSKLSNLKISEDLTITKIFHCDGLILCSTKENTRLVVWNPCTGQTRWIKPSKRYRSDDSYCLGYVNSKSSYHNYKILRYCFYYNDQDACVSEFEIYDFSSESWRVLDDYCTREWGLFCHGMSLKGNTYFVAGEKETGFFMLYFDFKTERFERLPLPYQSFDSEDTAVLSIVGGEKLAVLHQNIQSFSNEMRIWVTNKIDEAKDLTWSNFFLAVDYDIFNLPSVNNVTSFLLDEENKVAVCCDRHIDDEDKTRIYIVGVDLYKEVYKERTKGAHFNWPLLISYLPSLVHIQEKYPKDKRKGNKRRLVKRIT</sequence>
<organism>
    <name type="scientific">Arabidopsis thaliana</name>
    <name type="common">Mouse-ear cress</name>
    <dbReference type="NCBI Taxonomy" id="3702"/>
    <lineage>
        <taxon>Eukaryota</taxon>
        <taxon>Viridiplantae</taxon>
        <taxon>Streptophyta</taxon>
        <taxon>Embryophyta</taxon>
        <taxon>Tracheophyta</taxon>
        <taxon>Spermatophyta</taxon>
        <taxon>Magnoliopsida</taxon>
        <taxon>eudicotyledons</taxon>
        <taxon>Gunneridae</taxon>
        <taxon>Pentapetalae</taxon>
        <taxon>rosids</taxon>
        <taxon>malvids</taxon>
        <taxon>Brassicales</taxon>
        <taxon>Brassicaceae</taxon>
        <taxon>Camelineae</taxon>
        <taxon>Arabidopsis</taxon>
    </lineage>
</organism>
<accession>Q9LUP4</accession>
<proteinExistence type="predicted"/>
<evidence type="ECO:0000255" key="1">
    <source>
        <dbReference type="PROSITE-ProRule" id="PRU00080"/>
    </source>
</evidence>
<dbReference type="EMBL" id="AB022219">
    <property type="protein sequence ID" value="BAB02043.1"/>
    <property type="molecule type" value="Genomic_DNA"/>
</dbReference>
<dbReference type="EMBL" id="CP002686">
    <property type="protein sequence ID" value="AEE75966.1"/>
    <property type="molecule type" value="Genomic_DNA"/>
</dbReference>
<dbReference type="RefSeq" id="NP_188381.1">
    <property type="nucleotide sequence ID" value="NM_112634.1"/>
</dbReference>
<dbReference type="SMR" id="Q9LUP4"/>
<dbReference type="BioGRID" id="6353">
    <property type="interactions" value="6"/>
</dbReference>
<dbReference type="PaxDb" id="3702-AT3G17540.1"/>
<dbReference type="DNASU" id="821020"/>
<dbReference type="EnsemblPlants" id="AT3G17540.1">
    <property type="protein sequence ID" value="AT3G17540.1"/>
    <property type="gene ID" value="AT3G17540"/>
</dbReference>
<dbReference type="GeneID" id="821020"/>
<dbReference type="Gramene" id="AT3G17540.1">
    <property type="protein sequence ID" value="AT3G17540.1"/>
    <property type="gene ID" value="AT3G17540"/>
</dbReference>
<dbReference type="KEGG" id="ath:AT3G17540"/>
<dbReference type="Araport" id="AT3G17540"/>
<dbReference type="TAIR" id="AT3G17540"/>
<dbReference type="HOGENOM" id="CLU_034692_1_0_1"/>
<dbReference type="InParanoid" id="Q9LUP4"/>
<dbReference type="OMA" id="YHRSEAM"/>
<dbReference type="PhylomeDB" id="Q9LUP4"/>
<dbReference type="PRO" id="PR:Q9LUP4"/>
<dbReference type="Proteomes" id="UP000006548">
    <property type="component" value="Chromosome 3"/>
</dbReference>
<dbReference type="ExpressionAtlas" id="Q9LUP4">
    <property type="expression patterns" value="baseline and differential"/>
</dbReference>
<dbReference type="CDD" id="cd22157">
    <property type="entry name" value="F-box_AtFBW1-like"/>
    <property type="match status" value="1"/>
</dbReference>
<dbReference type="Gene3D" id="1.20.1280.50">
    <property type="match status" value="1"/>
</dbReference>
<dbReference type="Gene3D" id="2.120.10.80">
    <property type="entry name" value="Kelch-type beta propeller"/>
    <property type="match status" value="1"/>
</dbReference>
<dbReference type="InterPro" id="IPR006527">
    <property type="entry name" value="F-box-assoc_dom_typ1"/>
</dbReference>
<dbReference type="InterPro" id="IPR017451">
    <property type="entry name" value="F-box-assoc_interact_dom"/>
</dbReference>
<dbReference type="InterPro" id="IPR036047">
    <property type="entry name" value="F-box-like_dom_sf"/>
</dbReference>
<dbReference type="InterPro" id="IPR001810">
    <property type="entry name" value="F-box_dom"/>
</dbReference>
<dbReference type="InterPro" id="IPR011043">
    <property type="entry name" value="Gal_Oxase/kelch_b-propeller"/>
</dbReference>
<dbReference type="InterPro" id="IPR015915">
    <property type="entry name" value="Kelch-typ_b-propeller"/>
</dbReference>
<dbReference type="InterPro" id="IPR050796">
    <property type="entry name" value="SCF_F-box_component"/>
</dbReference>
<dbReference type="NCBIfam" id="TIGR01640">
    <property type="entry name" value="F_box_assoc_1"/>
    <property type="match status" value="1"/>
</dbReference>
<dbReference type="PANTHER" id="PTHR31672">
    <property type="entry name" value="BNACNNG10540D PROTEIN"/>
    <property type="match status" value="1"/>
</dbReference>
<dbReference type="PANTHER" id="PTHR31672:SF13">
    <property type="entry name" value="F-BOX PROTEIN CPR30-LIKE"/>
    <property type="match status" value="1"/>
</dbReference>
<dbReference type="Pfam" id="PF00646">
    <property type="entry name" value="F-box"/>
    <property type="match status" value="1"/>
</dbReference>
<dbReference type="Pfam" id="PF07734">
    <property type="entry name" value="FBA_1"/>
    <property type="match status" value="1"/>
</dbReference>
<dbReference type="SMART" id="SM00256">
    <property type="entry name" value="FBOX"/>
    <property type="match status" value="1"/>
</dbReference>
<dbReference type="SUPFAM" id="SSF81383">
    <property type="entry name" value="F-box domain"/>
    <property type="match status" value="1"/>
</dbReference>
<dbReference type="SUPFAM" id="SSF50965">
    <property type="entry name" value="Galactose oxidase, central domain"/>
    <property type="match status" value="1"/>
</dbReference>
<dbReference type="PROSITE" id="PS50181">
    <property type="entry name" value="FBOX"/>
    <property type="match status" value="1"/>
</dbReference>